<organism>
    <name type="scientific">Mycobacterium tuberculosis (strain ATCC 25618 / H37Rv)</name>
    <dbReference type="NCBI Taxonomy" id="83332"/>
    <lineage>
        <taxon>Bacteria</taxon>
        <taxon>Bacillati</taxon>
        <taxon>Actinomycetota</taxon>
        <taxon>Actinomycetes</taxon>
        <taxon>Mycobacteriales</taxon>
        <taxon>Mycobacteriaceae</taxon>
        <taxon>Mycobacterium</taxon>
        <taxon>Mycobacterium tuberculosis complex</taxon>
    </lineage>
</organism>
<protein>
    <recommendedName>
        <fullName evidence="2">Probable histone acetyltransferase Rv0428c</fullName>
        <ecNumber evidence="3">2.3.1.48</ecNumber>
    </recommendedName>
</protein>
<accession>P96274</accession>
<accession>F2GME5</accession>
<accession>I6XV88</accession>
<accession>L0T5C3</accession>
<dbReference type="EC" id="2.3.1.48" evidence="3"/>
<dbReference type="EMBL" id="AL123456">
    <property type="protein sequence ID" value="CCP43159.1"/>
    <property type="molecule type" value="Genomic_DNA"/>
</dbReference>
<dbReference type="RefSeq" id="NP_214942.1">
    <property type="nucleotide sequence ID" value="NC_000962.3"/>
</dbReference>
<dbReference type="RefSeq" id="WP_003900144.1">
    <property type="nucleotide sequence ID" value="NZ_NVQJ01000002.1"/>
</dbReference>
<dbReference type="SMR" id="P96274"/>
<dbReference type="FunCoup" id="P96274">
    <property type="interactions" value="115"/>
</dbReference>
<dbReference type="STRING" id="83332.Rv0428c"/>
<dbReference type="PaxDb" id="83332-Rv0428c"/>
<dbReference type="DNASU" id="886368"/>
<dbReference type="GeneID" id="886368"/>
<dbReference type="KEGG" id="mtu:Rv0428c"/>
<dbReference type="KEGG" id="mtv:RVBD_0428c"/>
<dbReference type="PATRIC" id="fig|83332.111.peg.469"/>
<dbReference type="TubercuList" id="Rv0428c"/>
<dbReference type="eggNOG" id="COG0456">
    <property type="taxonomic scope" value="Bacteria"/>
</dbReference>
<dbReference type="InParanoid" id="P96274"/>
<dbReference type="OrthoDB" id="9775595at2"/>
<dbReference type="PhylomeDB" id="P96274"/>
<dbReference type="Proteomes" id="UP000001584">
    <property type="component" value="Chromosome"/>
</dbReference>
<dbReference type="GO" id="GO:0016746">
    <property type="term" value="F:acyltransferase activity"/>
    <property type="evidence" value="ECO:0007669"/>
    <property type="project" value="UniProtKB-KW"/>
</dbReference>
<dbReference type="InterPro" id="IPR056935">
    <property type="entry name" value="Rv0428c-like_C"/>
</dbReference>
<dbReference type="InterPro" id="IPR056934">
    <property type="entry name" value="SH3_Rv0428c"/>
</dbReference>
<dbReference type="Pfam" id="PF24553">
    <property type="entry name" value="Rv0428c_C"/>
    <property type="match status" value="1"/>
</dbReference>
<dbReference type="Pfam" id="PF24551">
    <property type="entry name" value="SH3_Rv0428c"/>
    <property type="match status" value="1"/>
</dbReference>
<keyword id="KW-0012">Acyltransferase</keyword>
<keyword id="KW-1185">Reference proteome</keyword>
<keyword id="KW-0808">Transferase</keyword>
<comment type="function">
    <text evidence="1">Shows histone acetyl transferase (HAT) activity with recombinant eukaryotic H3 histone expressed in bacteria as substrate and acetyl-CoA as donor (PubMed:35175508). May be involved in survival under stress conditions (PubMed:35175508).</text>
</comment>
<comment type="catalytic activity">
    <reaction evidence="3">
        <text>L-lysyl-[histone] + acetyl-CoA = N(6)-acetyl-L-lysyl-[histone] + CoA + H(+)</text>
        <dbReference type="Rhea" id="RHEA:21992"/>
        <dbReference type="Rhea" id="RHEA-COMP:9845"/>
        <dbReference type="Rhea" id="RHEA-COMP:11338"/>
        <dbReference type="ChEBI" id="CHEBI:15378"/>
        <dbReference type="ChEBI" id="CHEBI:29969"/>
        <dbReference type="ChEBI" id="CHEBI:57287"/>
        <dbReference type="ChEBI" id="CHEBI:57288"/>
        <dbReference type="ChEBI" id="CHEBI:61930"/>
        <dbReference type="EC" id="2.3.1.48"/>
    </reaction>
</comment>
<comment type="biophysicochemical properties">
    <phDependence>
        <text evidence="1">Exhibits stability over a wide range of pH (5.0-9.0).</text>
    </phDependence>
    <temperatureDependence>
        <text evidence="1">Stable up to 40 degrees Celsius.</text>
    </temperatureDependence>
</comment>
<comment type="induction">
    <text evidence="1">Up-regulated in acidic and nutritive stress conditions (PubMed:35175508). Detected exclusively in intraphagosomally grown mycobacteria (PubMed:35175508).</text>
</comment>
<comment type="miscellaneous">
    <text evidence="1">Expression in M.smegmatis leads to enhanced growth rate and altered colony morphology, and promotes the survival of bacteria under acidic and nutritive stress conditions.</text>
</comment>
<reference key="1">
    <citation type="journal article" date="1998" name="Nature">
        <title>Deciphering the biology of Mycobacterium tuberculosis from the complete genome sequence.</title>
        <authorList>
            <person name="Cole S.T."/>
            <person name="Brosch R."/>
            <person name="Parkhill J."/>
            <person name="Garnier T."/>
            <person name="Churcher C.M."/>
            <person name="Harris D.E."/>
            <person name="Gordon S.V."/>
            <person name="Eiglmeier K."/>
            <person name="Gas S."/>
            <person name="Barry C.E. III"/>
            <person name="Tekaia F."/>
            <person name="Badcock K."/>
            <person name="Basham D."/>
            <person name="Brown D."/>
            <person name="Chillingworth T."/>
            <person name="Connor R."/>
            <person name="Davies R.M."/>
            <person name="Devlin K."/>
            <person name="Feltwell T."/>
            <person name="Gentles S."/>
            <person name="Hamlin N."/>
            <person name="Holroyd S."/>
            <person name="Hornsby T."/>
            <person name="Jagels K."/>
            <person name="Krogh A."/>
            <person name="McLean J."/>
            <person name="Moule S."/>
            <person name="Murphy L.D."/>
            <person name="Oliver S."/>
            <person name="Osborne J."/>
            <person name="Quail M.A."/>
            <person name="Rajandream M.A."/>
            <person name="Rogers J."/>
            <person name="Rutter S."/>
            <person name="Seeger K."/>
            <person name="Skelton S."/>
            <person name="Squares S."/>
            <person name="Squares R."/>
            <person name="Sulston J.E."/>
            <person name="Taylor K."/>
            <person name="Whitehead S."/>
            <person name="Barrell B.G."/>
        </authorList>
    </citation>
    <scope>NUCLEOTIDE SEQUENCE [LARGE SCALE GENOMIC DNA]</scope>
    <source>
        <strain>ATCC 25618 / H37Rv</strain>
    </source>
</reference>
<reference key="2">
    <citation type="journal article" date="2011" name="Mol. Cell. Proteomics">
        <title>Proteogenomic analysis of Mycobacterium tuberculosis by high resolution mass spectrometry.</title>
        <authorList>
            <person name="Kelkar D.S."/>
            <person name="Kumar D."/>
            <person name="Kumar P."/>
            <person name="Balakrishnan L."/>
            <person name="Muthusamy B."/>
            <person name="Yadav A.K."/>
            <person name="Shrivastava P."/>
            <person name="Marimuthu A."/>
            <person name="Anand S."/>
            <person name="Sundaram H."/>
            <person name="Kingsbury R."/>
            <person name="Harsha H.C."/>
            <person name="Nair B."/>
            <person name="Prasad T.S."/>
            <person name="Chauhan D.S."/>
            <person name="Katoch K."/>
            <person name="Katoch V.M."/>
            <person name="Kumar P."/>
            <person name="Chaerkady R."/>
            <person name="Ramachandran S."/>
            <person name="Dash D."/>
            <person name="Pandey A."/>
        </authorList>
    </citation>
    <scope>IDENTIFICATION BY MASS SPECTROMETRY [LARGE SCALE ANALYSIS]</scope>
</reference>
<reference key="3">
    <citation type="journal article" date="2022" name="Protein J.">
        <title>A phagosomally expressed gene, rv0428c, of Mycobacterium tuberculosis demonstrates acetyl transferase activity and plays a protective role under stress conditions.</title>
        <authorList>
            <person name="Sharma A."/>
            <person name="Kumar A."/>
            <person name="Rashid M."/>
            <person name="Amnekar R.V."/>
            <person name="Gupta S."/>
            <person name="Kaur J."/>
        </authorList>
    </citation>
    <scope>FUNCTION AS AN ACETYLTRANSFERASE</scope>
    <scope>BIOPHYSICOCHEMICAL PROPERTIES</scope>
    <scope>INDUCTION</scope>
    <scope>EXPRESSION IN M.SMEGMATIS</scope>
    <source>
        <strain>H37Ra</strain>
        <strain>H37Rv</strain>
    </source>
</reference>
<proteinExistence type="evidence at protein level"/>
<name>HAT2_MYCTU</name>
<feature type="chain" id="PRO_0000456584" description="Probable histone acetyltransferase Rv0428c">
    <location>
        <begin position="1"/>
        <end position="302"/>
    </location>
</feature>
<sequence>MVSWPGLGTRVTVRYRRPAGSMPPLTDAVGRLLAVDPTVRVQTKTGTIVEFSPVDVVALRVLTDAPVRTAAIRALEHAAAAAWPGVERTWLDGWLLRAGHGAVLAANSAVPLDISAHTNTITEISAWYASRDLQPWLAVPDRLLPLPADLAGERREQVLVRDVSTGEPDRSVTLLDHPDDTWLRLYHQRLPLDMATPVIDGELAFGSYLGVAVARAAVTDAPDGTRWVGLSAMRAADEQSATGSAGRQLWEALLGWGAGRGATRGYVRVHDTATSVLAESLGFRLHHHCRYLPAQSVGWDTF</sequence>
<evidence type="ECO:0000269" key="1">
    <source>
    </source>
</evidence>
<evidence type="ECO:0000305" key="2"/>
<evidence type="ECO:0000305" key="3">
    <source>
    </source>
</evidence>
<evidence type="ECO:0000312" key="4">
    <source>
        <dbReference type="EMBL" id="CCP43159.1"/>
    </source>
</evidence>
<gene>
    <name evidence="4" type="ordered locus">Rv0428c</name>
</gene>